<name>LUKL2_STAAR</name>
<organism>
    <name type="scientific">Staphylococcus aureus (strain MRSA252)</name>
    <dbReference type="NCBI Taxonomy" id="282458"/>
    <lineage>
        <taxon>Bacteria</taxon>
        <taxon>Bacillati</taxon>
        <taxon>Bacillota</taxon>
        <taxon>Bacilli</taxon>
        <taxon>Bacillales</taxon>
        <taxon>Staphylococcaceae</taxon>
        <taxon>Staphylococcus</taxon>
    </lineage>
</organism>
<proteinExistence type="inferred from homology"/>
<gene>
    <name type="ordered locus">SAR2108</name>
</gene>
<feature type="signal peptide" evidence="1">
    <location>
        <begin position="1"/>
        <end position="32"/>
    </location>
</feature>
<feature type="chain" id="PRO_0000298641" description="Uncharacterized leukocidin-like protein 2">
    <location>
        <begin position="33"/>
        <end position="351"/>
    </location>
</feature>
<feature type="region of interest" description="Disordered" evidence="2">
    <location>
        <begin position="26"/>
        <end position="74"/>
    </location>
</feature>
<feature type="compositionally biased region" description="Basic and acidic residues" evidence="2">
    <location>
        <begin position="33"/>
        <end position="60"/>
    </location>
</feature>
<sequence>MKNKKRVFIASSLSCVLLLLSAANTEANSANKDSQDQTKKEHVDKAQQKEKRNVNDKDKNTPGPDDIGKNGKVTKRTVSEYDKETNILQNLQFDFIDDPTYDKNVLLVKKQGSIHSNLKFESHRNETNASWLKYPSEYHVDFQVQRNPKTEILDQLPKNKISTAKVDSTFSYSLGGKFDSTKGIGRTSSNSYSKSISYNQQNYDTIASGKNNNRHVHWSVVANDLKYGNEIKNRNDEFLFYRNTRLSTVENPELSFASKYRYPALVRSGFNPEFLTYISNEKSNEKTRFEVTYTRNQDILKNKPGIHYGQPILEQNKDGQRFIVVYEVDWKNKTVKVVEKYSDQNKPYKEG</sequence>
<protein>
    <recommendedName>
        <fullName>Uncharacterized leukocidin-like protein 2</fullName>
    </recommendedName>
</protein>
<reference key="1">
    <citation type="journal article" date="2004" name="Proc. Natl. Acad. Sci. U.S.A.">
        <title>Complete genomes of two clinical Staphylococcus aureus strains: evidence for the rapid evolution of virulence and drug resistance.</title>
        <authorList>
            <person name="Holden M.T.G."/>
            <person name="Feil E.J."/>
            <person name="Lindsay J.A."/>
            <person name="Peacock S.J."/>
            <person name="Day N.P.J."/>
            <person name="Enright M.C."/>
            <person name="Foster T.J."/>
            <person name="Moore C.E."/>
            <person name="Hurst L."/>
            <person name="Atkin R."/>
            <person name="Barron A."/>
            <person name="Bason N."/>
            <person name="Bentley S.D."/>
            <person name="Chillingworth C."/>
            <person name="Chillingworth T."/>
            <person name="Churcher C."/>
            <person name="Clark L."/>
            <person name="Corton C."/>
            <person name="Cronin A."/>
            <person name="Doggett J."/>
            <person name="Dowd L."/>
            <person name="Feltwell T."/>
            <person name="Hance Z."/>
            <person name="Harris B."/>
            <person name="Hauser H."/>
            <person name="Holroyd S."/>
            <person name="Jagels K."/>
            <person name="James K.D."/>
            <person name="Lennard N."/>
            <person name="Line A."/>
            <person name="Mayes R."/>
            <person name="Moule S."/>
            <person name="Mungall K."/>
            <person name="Ormond D."/>
            <person name="Quail M.A."/>
            <person name="Rabbinowitsch E."/>
            <person name="Rutherford K.M."/>
            <person name="Sanders M."/>
            <person name="Sharp S."/>
            <person name="Simmonds M."/>
            <person name="Stevens K."/>
            <person name="Whitehead S."/>
            <person name="Barrell B.G."/>
            <person name="Spratt B.G."/>
            <person name="Parkhill J."/>
        </authorList>
    </citation>
    <scope>NUCLEOTIDE SEQUENCE [LARGE SCALE GENOMIC DNA]</scope>
    <source>
        <strain>MRSA252</strain>
    </source>
</reference>
<accession>Q6GF49</accession>
<dbReference type="EMBL" id="BX571856">
    <property type="protein sequence ID" value="CAG41090.1"/>
    <property type="molecule type" value="Genomic_DNA"/>
</dbReference>
<dbReference type="RefSeq" id="WP_000791402.1">
    <property type="nucleotide sequence ID" value="NC_002952.2"/>
</dbReference>
<dbReference type="SMR" id="Q6GF49"/>
<dbReference type="KEGG" id="sar:SAR2108"/>
<dbReference type="HOGENOM" id="CLU_865755_0_0_9"/>
<dbReference type="Proteomes" id="UP000000596">
    <property type="component" value="Chromosome"/>
</dbReference>
<dbReference type="GO" id="GO:0005576">
    <property type="term" value="C:extracellular region"/>
    <property type="evidence" value="ECO:0007669"/>
    <property type="project" value="InterPro"/>
</dbReference>
<dbReference type="GO" id="GO:0051715">
    <property type="term" value="P:cytolysis in another organism"/>
    <property type="evidence" value="ECO:0007669"/>
    <property type="project" value="InterPro"/>
</dbReference>
<dbReference type="Gene3D" id="2.70.240.10">
    <property type="entry name" value="Leukocidin/porin MspA"/>
    <property type="match status" value="1"/>
</dbReference>
<dbReference type="InterPro" id="IPR003963">
    <property type="entry name" value="Bi-component_toxin_staph"/>
</dbReference>
<dbReference type="InterPro" id="IPR016183">
    <property type="entry name" value="Leukocidin/Hemolysin_toxin"/>
</dbReference>
<dbReference type="InterPro" id="IPR036435">
    <property type="entry name" value="Leukocidin/porin_MspA_sf"/>
</dbReference>
<dbReference type="Pfam" id="PF07968">
    <property type="entry name" value="Leukocidin"/>
    <property type="match status" value="1"/>
</dbReference>
<dbReference type="PRINTS" id="PR01468">
    <property type="entry name" value="BICOMPNTOXIN"/>
</dbReference>
<dbReference type="SUPFAM" id="SSF56959">
    <property type="entry name" value="Leukocidin-like"/>
    <property type="match status" value="1"/>
</dbReference>
<comment type="similarity">
    <text evidence="3">Belongs to the aerolysin family.</text>
</comment>
<evidence type="ECO:0000255" key="1"/>
<evidence type="ECO:0000256" key="2">
    <source>
        <dbReference type="SAM" id="MobiDB-lite"/>
    </source>
</evidence>
<evidence type="ECO:0000305" key="3"/>
<keyword id="KW-0732">Signal</keyword>